<accession>B9K4G4</accession>
<feature type="chain" id="PRO_0000432250" description="Trans-3-hydroxy-L-proline dehydratase">
    <location>
        <begin position="1"/>
        <end position="342"/>
    </location>
</feature>
<feature type="active site" description="Proton acceptor" evidence="4">
    <location>
        <position position="90"/>
    </location>
</feature>
<feature type="binding site" evidence="1">
    <location>
        <begin position="91"/>
        <end position="92"/>
    </location>
    <ligand>
        <name>substrate</name>
    </ligand>
</feature>
<feature type="binding site" evidence="1">
    <location>
        <position position="252"/>
    </location>
    <ligand>
        <name>substrate</name>
    </ligand>
</feature>
<feature type="binding site" evidence="1">
    <location>
        <begin position="257"/>
        <end position="258"/>
    </location>
    <ligand>
        <name>substrate</name>
    </ligand>
</feature>
<feature type="strand" evidence="7">
    <location>
        <begin position="7"/>
        <end position="14"/>
    </location>
</feature>
<feature type="strand" evidence="7">
    <location>
        <begin position="20"/>
        <end position="25"/>
    </location>
</feature>
<feature type="helix" evidence="7">
    <location>
        <begin position="34"/>
        <end position="44"/>
    </location>
</feature>
<feature type="helix" evidence="7">
    <location>
        <begin position="46"/>
        <end position="52"/>
    </location>
</feature>
<feature type="strand" evidence="7">
    <location>
        <begin position="63"/>
        <end position="67"/>
    </location>
</feature>
<feature type="strand" evidence="7">
    <location>
        <begin position="75"/>
        <end position="82"/>
    </location>
</feature>
<feature type="helix" evidence="7">
    <location>
        <begin position="91"/>
        <end position="103"/>
    </location>
</feature>
<feature type="strand" evidence="7">
    <location>
        <begin position="111"/>
        <end position="120"/>
    </location>
</feature>
<feature type="strand" evidence="7">
    <location>
        <begin position="123"/>
        <end position="132"/>
    </location>
</feature>
<feature type="strand" evidence="7">
    <location>
        <begin position="135"/>
        <end position="142"/>
    </location>
</feature>
<feature type="strand" evidence="7">
    <location>
        <begin position="146"/>
        <end position="157"/>
    </location>
</feature>
<feature type="turn" evidence="7">
    <location>
        <begin position="158"/>
        <end position="160"/>
    </location>
</feature>
<feature type="strand" evidence="7">
    <location>
        <begin position="161"/>
        <end position="178"/>
    </location>
</feature>
<feature type="turn" evidence="7">
    <location>
        <begin position="180"/>
        <end position="183"/>
    </location>
</feature>
<feature type="helix" evidence="7">
    <location>
        <begin position="188"/>
        <end position="190"/>
    </location>
</feature>
<feature type="helix" evidence="7">
    <location>
        <begin position="191"/>
        <end position="208"/>
    </location>
</feature>
<feature type="strand" evidence="7">
    <location>
        <begin position="224"/>
        <end position="228"/>
    </location>
</feature>
<feature type="strand" evidence="7">
    <location>
        <begin position="232"/>
        <end position="234"/>
    </location>
</feature>
<feature type="strand" evidence="7">
    <location>
        <begin position="237"/>
        <end position="246"/>
    </location>
</feature>
<feature type="turn" evidence="7">
    <location>
        <begin position="247"/>
        <end position="249"/>
    </location>
</feature>
<feature type="helix" evidence="7">
    <location>
        <begin position="257"/>
        <end position="269"/>
    </location>
</feature>
<feature type="strand" evidence="7">
    <location>
        <begin position="279"/>
        <end position="282"/>
    </location>
</feature>
<feature type="strand" evidence="7">
    <location>
        <begin position="288"/>
        <end position="299"/>
    </location>
</feature>
<feature type="strand" evidence="7">
    <location>
        <begin position="302"/>
        <end position="311"/>
    </location>
</feature>
<feature type="strand" evidence="7">
    <location>
        <begin position="313"/>
        <end position="321"/>
    </location>
</feature>
<feature type="turn" evidence="7">
    <location>
        <begin position="336"/>
        <end position="338"/>
    </location>
</feature>
<sequence length="342" mass="36363">MRTNKVIHVIGVHAEGEVGDVIVGGVSPPPGDTLWEQSRFIASDETLRNFVLNEPRGGVFRHVNLLVPPKDPRAQMGFIIMEPADTPPMSGSNSICVSTAILDSGIISMQEPLTHMVLEAPGGVIEVTAECANGKAERINVLNVASFVTRLAAALEVEGLGTLTVDTAYGGDSFVIVDAIGLGFSLKPDEARELAELGMKITAAANEQLGFVHPCNADWNHISFCQMTTPITRENGILTGKSAVAIRPGKIDRSPTGTGCSARLAVMHARGEIGIGETYIGRSIIDSEFKCHIDSLTEIGGLSAIRPVISGRAWITGVSQLMLDPTDPWPSGYQLSDTWPAI</sequence>
<keyword id="KW-0002">3D-structure</keyword>
<keyword id="KW-0456">Lyase</keyword>
<keyword id="KW-0614">Plasmid</keyword>
<keyword id="KW-1185">Reference proteome</keyword>
<geneLocation type="plasmid" evidence="5 6">
    <name>pAtS4e</name>
</geneLocation>
<organism>
    <name type="scientific">Allorhizobium ampelinum (strain ATCC BAA-846 / DSM 112012 / S4)</name>
    <name type="common">Agrobacterium vitis (strain S4)</name>
    <dbReference type="NCBI Taxonomy" id="311402"/>
    <lineage>
        <taxon>Bacteria</taxon>
        <taxon>Pseudomonadati</taxon>
        <taxon>Pseudomonadota</taxon>
        <taxon>Alphaproteobacteria</taxon>
        <taxon>Hyphomicrobiales</taxon>
        <taxon>Rhizobiaceae</taxon>
        <taxon>Rhizobium/Agrobacterium group</taxon>
        <taxon>Allorhizobium</taxon>
        <taxon>Allorhizobium ampelinum</taxon>
    </lineage>
</organism>
<proteinExistence type="evidence at protein level"/>
<gene>
    <name evidence="5" type="ordered locus">Avi_7022</name>
</gene>
<evidence type="ECO:0000269" key="1">
    <source>
    </source>
</evidence>
<evidence type="ECO:0000303" key="2">
    <source>
    </source>
</evidence>
<evidence type="ECO:0000305" key="3"/>
<evidence type="ECO:0000305" key="4">
    <source>
    </source>
</evidence>
<evidence type="ECO:0000312" key="5">
    <source>
        <dbReference type="EMBL" id="ACM39762.1"/>
    </source>
</evidence>
<evidence type="ECO:0000312" key="6">
    <source>
        <dbReference type="Proteomes" id="UP000001596"/>
    </source>
</evidence>
<evidence type="ECO:0007829" key="7">
    <source>
        <dbReference type="PDB" id="4K7G"/>
    </source>
</evidence>
<reference key="1">
    <citation type="journal article" date="2009" name="J. Bacteriol.">
        <title>Genome sequences of three Agrobacterium biovars help elucidate the evolution of multichromosome genomes in bacteria.</title>
        <authorList>
            <person name="Slater S.C."/>
            <person name="Goldman B.S."/>
            <person name="Goodner B."/>
            <person name="Setubal J.C."/>
            <person name="Farrand S.K."/>
            <person name="Nester E.W."/>
            <person name="Burr T.J."/>
            <person name="Banta L."/>
            <person name="Dickerman A.W."/>
            <person name="Paulsen I."/>
            <person name="Otten L."/>
            <person name="Suen G."/>
            <person name="Welch R."/>
            <person name="Almeida N.F."/>
            <person name="Arnold F."/>
            <person name="Burton O.T."/>
            <person name="Du Z."/>
            <person name="Ewing A."/>
            <person name="Godsy E."/>
            <person name="Heisel S."/>
            <person name="Houmiel K.L."/>
            <person name="Jhaveri J."/>
            <person name="Lu J."/>
            <person name="Miller N.M."/>
            <person name="Norton S."/>
            <person name="Chen Q."/>
            <person name="Phoolcharoen W."/>
            <person name="Ohlin V."/>
            <person name="Ondrusek D."/>
            <person name="Pride N."/>
            <person name="Stricklin S.L."/>
            <person name="Sun J."/>
            <person name="Wheeler C."/>
            <person name="Wilson L."/>
            <person name="Zhu H."/>
            <person name="Wood D.W."/>
        </authorList>
    </citation>
    <scope>NUCLEOTIDE SEQUENCE [LARGE SCALE GENOMIC DNA]</scope>
    <source>
        <strain>ATCC BAA-846 / DSM 112012 / S4</strain>
    </source>
</reference>
<reference key="2">
    <citation type="journal article" date="2014" name="Elife">
        <title>Prediction and characterization of enzymatic activities guided by sequence similarity and genome neighborhood networks.</title>
        <authorList>
            <person name="Zhao S."/>
            <person name="Sakai A."/>
            <person name="Zhang X."/>
            <person name="Vetting M.W."/>
            <person name="Kumar R."/>
            <person name="Hillerich B."/>
            <person name="San Francisco B."/>
            <person name="Solbiati J."/>
            <person name="Steves A."/>
            <person name="Brown S."/>
            <person name="Akiva E."/>
            <person name="Barber A."/>
            <person name="Seidel R.D."/>
            <person name="Babbitt P.C."/>
            <person name="Almo S.C."/>
            <person name="Gerlt J.A."/>
            <person name="Jacobson M.P."/>
        </authorList>
    </citation>
    <scope>X-RAY CRYSTALLOGRAPHY (2.00 ANGSTROMS) IN COMPLEX WITH PYRROLE 2-CARBOXYLATE</scope>
    <scope>FUNCTION</scope>
    <scope>CATALYTIC ACTIVITY</scope>
    <scope>BIOPHYSICOCHEMICAL PROPERTIES</scope>
    <scope>ACTIVE SITE</scope>
    <source>
        <strain>ATCC BAA-846 / DSM 112012 / S4</strain>
    </source>
</reference>
<protein>
    <recommendedName>
        <fullName evidence="2">Trans-3-hydroxy-L-proline dehydratase</fullName>
        <shortName>T3LHyp dehydratase</shortName>
        <shortName evidence="2">t3HypD</shortName>
        <ecNumber evidence="1">4.2.1.77</ecNumber>
    </recommendedName>
    <alternativeName>
        <fullName>Trans-L-3-hydroxyproline dehydratase</fullName>
    </alternativeName>
</protein>
<dbReference type="EC" id="4.2.1.77" evidence="1"/>
<dbReference type="EMBL" id="CP000638">
    <property type="protein sequence ID" value="ACM39762.1"/>
    <property type="molecule type" value="Genomic_DNA"/>
</dbReference>
<dbReference type="RefSeq" id="WP_015918209.1">
    <property type="nucleotide sequence ID" value="NC_011981.1"/>
</dbReference>
<dbReference type="PDB" id="4K7G">
    <property type="method" value="X-ray"/>
    <property type="resolution" value="2.00 A"/>
    <property type="chains" value="B/D=1-342"/>
</dbReference>
<dbReference type="PDBsum" id="4K7G"/>
<dbReference type="SMR" id="B9K4G4"/>
<dbReference type="KEGG" id="avi:Avi_7022"/>
<dbReference type="eggNOG" id="COG3938">
    <property type="taxonomic scope" value="Bacteria"/>
</dbReference>
<dbReference type="HOGENOM" id="CLU_036729_2_0_5"/>
<dbReference type="SABIO-RK" id="B9K4G4"/>
<dbReference type="EvolutionaryTrace" id="B9K4G4"/>
<dbReference type="Proteomes" id="UP000001596">
    <property type="component" value="Plasmid pAtS4e"/>
</dbReference>
<dbReference type="GO" id="GO:0047580">
    <property type="term" value="F:4-hydroxyproline epimerase activity"/>
    <property type="evidence" value="ECO:0007669"/>
    <property type="project" value="TreeGrafter"/>
</dbReference>
<dbReference type="GO" id="GO:0050346">
    <property type="term" value="F:trans-L-3-hydroxyproline dehydratase activity"/>
    <property type="evidence" value="ECO:0000314"/>
    <property type="project" value="CACAO"/>
</dbReference>
<dbReference type="FunFam" id="3.10.310.10:FF:000010">
    <property type="entry name" value="Proline racemase"/>
    <property type="match status" value="1"/>
</dbReference>
<dbReference type="Gene3D" id="3.10.310.10">
    <property type="entry name" value="Diaminopimelate Epimerase, Chain A, domain 1"/>
    <property type="match status" value="2"/>
</dbReference>
<dbReference type="InterPro" id="IPR008794">
    <property type="entry name" value="Pro_racemase_fam"/>
</dbReference>
<dbReference type="NCBIfam" id="NF047722">
    <property type="entry name" value="T3LHypDht"/>
    <property type="match status" value="1"/>
</dbReference>
<dbReference type="PANTHER" id="PTHR33442:SF5">
    <property type="entry name" value="BIFUNCTIONAL TRANS-3-HYDROXY-L-PROLINE DEHYDRATASE_2-EPIMERASE"/>
    <property type="match status" value="1"/>
</dbReference>
<dbReference type="PANTHER" id="PTHR33442">
    <property type="entry name" value="TRANS-3-HYDROXY-L-PROLINE DEHYDRATASE"/>
    <property type="match status" value="1"/>
</dbReference>
<dbReference type="Pfam" id="PF05544">
    <property type="entry name" value="Pro_racemase"/>
    <property type="match status" value="1"/>
</dbReference>
<dbReference type="PIRSF" id="PIRSF029792">
    <property type="entry name" value="Pro_racemase"/>
    <property type="match status" value="1"/>
</dbReference>
<dbReference type="SFLD" id="SFLDS00028">
    <property type="entry name" value="Proline_Racemase"/>
    <property type="match status" value="1"/>
</dbReference>
<dbReference type="SUPFAM" id="SSF54506">
    <property type="entry name" value="Diaminopimelate epimerase-like"/>
    <property type="match status" value="1"/>
</dbReference>
<name>T3HPD_ALLAM</name>
<comment type="function">
    <text evidence="1 3">Catalyzes the dehydration of trans-3-hydroxy-L-proline (t3LHyp) to Delta(1)-pyrroline-2-carboxylate (Pyr2C). Is likely involved in a degradation pathway that converts t3LHyp to L-proline. Displays neither proline racemase activity nor 4-hydroxyproline 2-epimerase activity.</text>
</comment>
<comment type="catalytic activity">
    <reaction evidence="1">
        <text>trans-3-hydroxy-L-proline = 1-pyrroline-2-carboxylate + H2O</text>
        <dbReference type="Rhea" id="RHEA:10320"/>
        <dbReference type="ChEBI" id="CHEBI:15377"/>
        <dbReference type="ChEBI" id="CHEBI:39785"/>
        <dbReference type="ChEBI" id="CHEBI:57938"/>
        <dbReference type="EC" id="4.2.1.77"/>
    </reaction>
</comment>
<comment type="biophysicochemical properties">
    <kinetics>
        <KM evidence="1">15 mM for trans-3-hydroxy-L-proline</KM>
        <text evidence="1">kcat is 4.3 sec(-1) for t3LHyp dehydration.</text>
    </kinetics>
</comment>
<comment type="similarity">
    <text evidence="3">Belongs to the proline racemase family.</text>
</comment>